<evidence type="ECO:0000255" key="1">
    <source>
        <dbReference type="HAMAP-Rule" id="MF_01614"/>
    </source>
</evidence>
<proteinExistence type="inferred from homology"/>
<comment type="function">
    <text evidence="1">Catalyzes the reduction of the double bond of an array of alpha,beta-unsaturated aldehydes and ketones. It also reduces the nitro group of nitroester and nitroaromatic compounds. It could have a role in detoxification processes.</text>
</comment>
<comment type="catalytic activity">
    <reaction evidence="1">
        <text>A + NADPH + H(+) = AH2 + NADP(+)</text>
        <dbReference type="Rhea" id="RHEA:13149"/>
        <dbReference type="ChEBI" id="CHEBI:13193"/>
        <dbReference type="ChEBI" id="CHEBI:15378"/>
        <dbReference type="ChEBI" id="CHEBI:17499"/>
        <dbReference type="ChEBI" id="CHEBI:57783"/>
        <dbReference type="ChEBI" id="CHEBI:58349"/>
        <dbReference type="EC" id="1.6.99.1"/>
    </reaction>
</comment>
<comment type="cofactor">
    <cofactor evidence="1">
        <name>FMN</name>
        <dbReference type="ChEBI" id="CHEBI:58210"/>
    </cofactor>
</comment>
<comment type="subunit">
    <text evidence="1">Homotetramer.</text>
</comment>
<comment type="similarity">
    <text evidence="1">Belongs to the NADH:flavin oxidoreductase/NADH oxidase family. NamA subfamily.</text>
</comment>
<protein>
    <recommendedName>
        <fullName evidence="1">NADPH dehydrogenase</fullName>
        <ecNumber evidence="1">1.6.99.1</ecNumber>
    </recommendedName>
</protein>
<feature type="chain" id="PRO_1000185863" description="NADPH dehydrogenase">
    <location>
        <begin position="1"/>
        <end position="345"/>
    </location>
</feature>
<feature type="binding site" evidence="1">
    <location>
        <begin position="23"/>
        <end position="26"/>
    </location>
    <ligand>
        <name>FMN</name>
        <dbReference type="ChEBI" id="CHEBI:58210"/>
    </ligand>
</feature>
<feature type="binding site" evidence="1">
    <location>
        <position position="28"/>
    </location>
    <ligand>
        <name>substrate</name>
    </ligand>
</feature>
<feature type="binding site" evidence="1">
    <location>
        <position position="60"/>
    </location>
    <ligand>
        <name>FMN</name>
        <dbReference type="ChEBI" id="CHEBI:58210"/>
    </ligand>
</feature>
<feature type="binding site" evidence="1">
    <location>
        <position position="102"/>
    </location>
    <ligand>
        <name>FMN</name>
        <dbReference type="ChEBI" id="CHEBI:58210"/>
    </ligand>
</feature>
<feature type="binding site" evidence="1">
    <location>
        <begin position="164"/>
        <end position="167"/>
    </location>
    <ligand>
        <name>substrate</name>
    </ligand>
</feature>
<feature type="binding site" evidence="1">
    <location>
        <position position="215"/>
    </location>
    <ligand>
        <name>FMN</name>
        <dbReference type="ChEBI" id="CHEBI:58210"/>
    </ligand>
</feature>
<feature type="binding site" evidence="1">
    <location>
        <begin position="307"/>
        <end position="308"/>
    </location>
    <ligand>
        <name>FMN</name>
        <dbReference type="ChEBI" id="CHEBI:58210"/>
    </ligand>
</feature>
<reference key="1">
    <citation type="journal article" date="2009" name="J. Bacteriol.">
        <title>Complete genome sequence of the extremophilic Bacillus cereus strain Q1 with industrial applications.</title>
        <authorList>
            <person name="Xiong Z."/>
            <person name="Jiang Y."/>
            <person name="Qi D."/>
            <person name="Lu H."/>
            <person name="Yang F."/>
            <person name="Yang J."/>
            <person name="Chen L."/>
            <person name="Sun L."/>
            <person name="Xu X."/>
            <person name="Xue Y."/>
            <person name="Zhu Y."/>
            <person name="Jin Q."/>
        </authorList>
    </citation>
    <scope>NUCLEOTIDE SEQUENCE [LARGE SCALE GENOMIC DNA]</scope>
    <source>
        <strain>Q1</strain>
    </source>
</reference>
<sequence length="345" mass="38605">MNYKLFSPYTIKDVTLKNRIVMSPMCMYSSKNEDGQITNFHLIHYGTRAAGQVGLVMIEATAVLPEGRISNKDLGIWDDSLIEGLHKATTFIHDNGAKAAIQLAHAGRKAELETDALAPSAIPFNETMKMPIEMSKHQIKDTVLAFQQAAVRSKQAGFDVIEIHGAHGYLINEFLSPLTNKRTDEYGGSPENRYRFLREIIESINEVWNGPLFVRISANDYHPDGLTVQDYVQYTKWMKEQGVDLIDCSSGAVVPARIDVYPGYQVQYAKHIKEHANIATGAVGLITTGAQAEQILNNNEADLIFIGRELLRNPYFPRIAANELGFELEEPYQYERAPGKISTNK</sequence>
<name>NAMA_BACCQ</name>
<gene>
    <name evidence="1" type="primary">namA</name>
    <name type="ordered locus">BCQ_2023</name>
</gene>
<keyword id="KW-0216">Detoxification</keyword>
<keyword id="KW-0285">Flavoprotein</keyword>
<keyword id="KW-0288">FMN</keyword>
<keyword id="KW-0521">NADP</keyword>
<keyword id="KW-0560">Oxidoreductase</keyword>
<accession>B9IY25</accession>
<organism>
    <name type="scientific">Bacillus cereus (strain Q1)</name>
    <dbReference type="NCBI Taxonomy" id="361100"/>
    <lineage>
        <taxon>Bacteria</taxon>
        <taxon>Bacillati</taxon>
        <taxon>Bacillota</taxon>
        <taxon>Bacilli</taxon>
        <taxon>Bacillales</taxon>
        <taxon>Bacillaceae</taxon>
        <taxon>Bacillus</taxon>
        <taxon>Bacillus cereus group</taxon>
    </lineage>
</organism>
<dbReference type="EC" id="1.6.99.1" evidence="1"/>
<dbReference type="EMBL" id="CP000227">
    <property type="protein sequence ID" value="ACM12451.1"/>
    <property type="molecule type" value="Genomic_DNA"/>
</dbReference>
<dbReference type="SMR" id="B9IY25"/>
<dbReference type="KEGG" id="bcq:BCQ_2023"/>
<dbReference type="HOGENOM" id="CLU_012153_2_1_9"/>
<dbReference type="Proteomes" id="UP000000441">
    <property type="component" value="Chromosome"/>
</dbReference>
<dbReference type="GO" id="GO:0010181">
    <property type="term" value="F:FMN binding"/>
    <property type="evidence" value="ECO:0007669"/>
    <property type="project" value="UniProtKB-UniRule"/>
</dbReference>
<dbReference type="GO" id="GO:0050661">
    <property type="term" value="F:NADP binding"/>
    <property type="evidence" value="ECO:0007669"/>
    <property type="project" value="UniProtKB-UniRule"/>
</dbReference>
<dbReference type="GO" id="GO:0003959">
    <property type="term" value="F:NADPH dehydrogenase activity"/>
    <property type="evidence" value="ECO:0007669"/>
    <property type="project" value="UniProtKB-UniRule"/>
</dbReference>
<dbReference type="GO" id="GO:0009636">
    <property type="term" value="P:response to toxic substance"/>
    <property type="evidence" value="ECO:0007669"/>
    <property type="project" value="UniProtKB-KW"/>
</dbReference>
<dbReference type="CDD" id="cd02932">
    <property type="entry name" value="OYE_YqiM_FMN"/>
    <property type="match status" value="1"/>
</dbReference>
<dbReference type="Gene3D" id="3.20.20.70">
    <property type="entry name" value="Aldolase class I"/>
    <property type="match status" value="1"/>
</dbReference>
<dbReference type="HAMAP" id="MF_01614">
    <property type="entry name" value="NamA"/>
    <property type="match status" value="1"/>
</dbReference>
<dbReference type="InterPro" id="IPR013785">
    <property type="entry name" value="Aldolase_TIM"/>
</dbReference>
<dbReference type="InterPro" id="IPR023663">
    <property type="entry name" value="NADPH_DH_bac"/>
</dbReference>
<dbReference type="InterPro" id="IPR001155">
    <property type="entry name" value="OxRdtase_FMN_N"/>
</dbReference>
<dbReference type="InterPro" id="IPR044152">
    <property type="entry name" value="YqjM-like"/>
</dbReference>
<dbReference type="NCBIfam" id="NF010047">
    <property type="entry name" value="PRK13523.1"/>
    <property type="match status" value="1"/>
</dbReference>
<dbReference type="PANTHER" id="PTHR43303">
    <property type="entry name" value="NADPH DEHYDROGENASE C23G7.10C-RELATED"/>
    <property type="match status" value="1"/>
</dbReference>
<dbReference type="PANTHER" id="PTHR43303:SF4">
    <property type="entry name" value="NADPH DEHYDROGENASE C23G7.10C-RELATED"/>
    <property type="match status" value="1"/>
</dbReference>
<dbReference type="Pfam" id="PF00724">
    <property type="entry name" value="Oxidored_FMN"/>
    <property type="match status" value="1"/>
</dbReference>
<dbReference type="SUPFAM" id="SSF51395">
    <property type="entry name" value="FMN-linked oxidoreductases"/>
    <property type="match status" value="1"/>
</dbReference>